<dbReference type="EMBL" id="CP000918">
    <property type="protein sequence ID" value="ACO17613.1"/>
    <property type="molecule type" value="Genomic_DNA"/>
</dbReference>
<dbReference type="RefSeq" id="WP_000065988.1">
    <property type="nucleotide sequence ID" value="NC_012468.1"/>
</dbReference>
<dbReference type="SMR" id="C1C7X3"/>
<dbReference type="KEGG" id="snm:SP70585_1411"/>
<dbReference type="HOGENOM" id="CLU_140243_2_0_9"/>
<dbReference type="Proteomes" id="UP000002211">
    <property type="component" value="Chromosome"/>
</dbReference>
<dbReference type="Gene3D" id="1.20.1500.10">
    <property type="entry name" value="YheA/YmcA-like"/>
    <property type="match status" value="1"/>
</dbReference>
<dbReference type="HAMAP" id="MF_01526">
    <property type="entry name" value="UPF0342"/>
    <property type="match status" value="1"/>
</dbReference>
<dbReference type="InterPro" id="IPR010368">
    <property type="entry name" value="Com_YlbF"/>
</dbReference>
<dbReference type="InterPro" id="IPR023378">
    <property type="entry name" value="YheA/YmcA-like_dom_sf"/>
</dbReference>
<dbReference type="NCBIfam" id="NF010209">
    <property type="entry name" value="PRK13676.1-1"/>
    <property type="match status" value="1"/>
</dbReference>
<dbReference type="Pfam" id="PF06133">
    <property type="entry name" value="Com_YlbF"/>
    <property type="match status" value="1"/>
</dbReference>
<dbReference type="SUPFAM" id="SSF158622">
    <property type="entry name" value="YheA/YmcA-like"/>
    <property type="match status" value="1"/>
</dbReference>
<accession>C1C7X3</accession>
<feature type="chain" id="PRO_1000185144" description="UPF0342 protein SP70585_1411">
    <location>
        <begin position="1"/>
        <end position="112"/>
    </location>
</feature>
<protein>
    <recommendedName>
        <fullName evidence="1">UPF0342 protein SP70585_1411</fullName>
    </recommendedName>
</protein>
<proteinExistence type="inferred from homology"/>
<reference key="1">
    <citation type="journal article" date="2010" name="Genome Biol.">
        <title>Structure and dynamics of the pan-genome of Streptococcus pneumoniae and closely related species.</title>
        <authorList>
            <person name="Donati C."/>
            <person name="Hiller N.L."/>
            <person name="Tettelin H."/>
            <person name="Muzzi A."/>
            <person name="Croucher N.J."/>
            <person name="Angiuoli S.V."/>
            <person name="Oggioni M."/>
            <person name="Dunning Hotopp J.C."/>
            <person name="Hu F.Z."/>
            <person name="Riley D.R."/>
            <person name="Covacci A."/>
            <person name="Mitchell T.J."/>
            <person name="Bentley S.D."/>
            <person name="Kilian M."/>
            <person name="Ehrlich G.D."/>
            <person name="Rappuoli R."/>
            <person name="Moxon E.R."/>
            <person name="Masignani V."/>
        </authorList>
    </citation>
    <scope>NUCLEOTIDE SEQUENCE [LARGE SCALE GENOMIC DNA]</scope>
    <source>
        <strain>70585</strain>
    </source>
</reference>
<gene>
    <name type="ordered locus">SP70585_1411</name>
</gene>
<sequence>MSNIYDSANELSRGLRGLPEYKAVKAAKDAIAADAEASKIFTEYLAFQEEIQKLAHTGQMPDASFQAKMEGFGKQIQGNSLLSEFFTKQQQLAIYLSDIEKIVFEPVSELLK</sequence>
<comment type="similarity">
    <text evidence="1">Belongs to the UPF0342 family.</text>
</comment>
<organism>
    <name type="scientific">Streptococcus pneumoniae (strain 70585)</name>
    <dbReference type="NCBI Taxonomy" id="488221"/>
    <lineage>
        <taxon>Bacteria</taxon>
        <taxon>Bacillati</taxon>
        <taxon>Bacillota</taxon>
        <taxon>Bacilli</taxon>
        <taxon>Lactobacillales</taxon>
        <taxon>Streptococcaceae</taxon>
        <taxon>Streptococcus</taxon>
    </lineage>
</organism>
<name>Y1411_STRP7</name>
<evidence type="ECO:0000255" key="1">
    <source>
        <dbReference type="HAMAP-Rule" id="MF_01526"/>
    </source>
</evidence>